<protein>
    <recommendedName>
        <fullName evidence="1">2-oxoglutarate dehydrogenase E1 component</fullName>
        <ecNumber evidence="1">1.2.4.2</ecNumber>
    </recommendedName>
    <alternativeName>
        <fullName evidence="1">Alpha-ketoglutarate dehydrogenase</fullName>
    </alternativeName>
</protein>
<accession>Q8CUL8</accession>
<proteinExistence type="inferred from homology"/>
<name>ODO1_OCEIH</name>
<comment type="function">
    <text evidence="1">E1 component of the 2-oxoglutarate dehydrogenase (OGDH) complex which catalyzes the decarboxylation of 2-oxoglutarate, the first step in the conversion of 2-oxoglutarate to succinyl-CoA and CO(2).</text>
</comment>
<comment type="catalytic activity">
    <reaction evidence="1">
        <text>N(6)-[(R)-lipoyl]-L-lysyl-[protein] + 2-oxoglutarate + H(+) = N(6)-[(R)-S(8)-succinyldihydrolipoyl]-L-lysyl-[protein] + CO2</text>
        <dbReference type="Rhea" id="RHEA:12188"/>
        <dbReference type="Rhea" id="RHEA-COMP:10474"/>
        <dbReference type="Rhea" id="RHEA-COMP:20092"/>
        <dbReference type="ChEBI" id="CHEBI:15378"/>
        <dbReference type="ChEBI" id="CHEBI:16526"/>
        <dbReference type="ChEBI" id="CHEBI:16810"/>
        <dbReference type="ChEBI" id="CHEBI:83099"/>
        <dbReference type="ChEBI" id="CHEBI:83120"/>
        <dbReference type="EC" id="1.2.4.2"/>
    </reaction>
</comment>
<comment type="cofactor">
    <cofactor evidence="1">
        <name>thiamine diphosphate</name>
        <dbReference type="ChEBI" id="CHEBI:58937"/>
    </cofactor>
</comment>
<comment type="subunit">
    <text evidence="1">Homodimer. Part of the 2-oxoglutarate dehydrogenase (OGDH) complex composed of E1 (2-oxoglutarate dehydrogenase), E2 (dihydrolipoamide succinyltransferase) and E3 (dihydrolipoamide dehydrogenase); the complex contains multiple copies of the three enzymatic components (E1, E2 and E3).</text>
</comment>
<comment type="similarity">
    <text evidence="1">Belongs to the alpha-ketoglutarate dehydrogenase family.</text>
</comment>
<sequence length="953" mass="107266">MAENAESAERFWGQFHGQNTGYLEQQFELYKEDPELVESSIRTIFDTHGAPSWLSSTENVKSVSNASDFDVTKLTSAIRLVEAIRRYGHTDADIYPVGGYKGDRSKMLDLSTYNLKEQDLEKIPASWIWEKQAPGVATALDVVNQLKKYYTGTITFEYDHVNNDEERKWLFDLIEEGNARLDPSDDERKKILQRLADVEGFEKFLHKTFVGQKRFSIEGLESMVPMIDHIVQYSNQDSIEHVMMGMAHRGRLSVLANVLGKPYDKIFSEFNYTKEKELMPSEGSRAINYGWTGDVKYHYGAEKEVEFGNKGQTRITLAHNPSHLEFVNPVVEGFTRAAQDDRSEKGYPKQVTNKAVSVLIHGDAAFIGEGVVAETLNLSGLPGYSTGGTLHIIANNLLGYTTDREDGRSTRYASDLAKGFEIPVIRVNADDPISCISAIKIAYEYRQKFQKDFLIDLVGYRRYGHNEMDEPRTTQPSLYQQIDDHPSVASLFGKGMEEKGILQEGGFEEVKSAVEKKLTDIYKGMTESEIGEPEAKLMPQVLTNGLDQFTTAIDLATLKSINEELLERPEGFKGFKKTERILQRRKDALEEGNKADWGTGEALAFASILKEGTPIRLTGQDTERGTFAHRHIVLHDVETGEKYSPLHGLSDVEASFDVRNSPLSEAGVLGFEYGYSVQSPDTLVIWEAQFGDFANAGQVIFDQFISSARAKWGEKSNMVLLLPHGYEGQGPEHSSARLERFLQMAAENNWIVANVTSSAQLFHILRRQAAMRDRDEARPLVLMTPKSSLIRHPRMGATAEEFTDGGFLALRDQPGFEANREKVTRLVVGSGKMMIDIEEAMDDSDETYDWLQIKRVEQIYPFPKKALEEEIKQLPNLKEIVWVQEEPKNMGAWNFVDDYLRELLNEDQKLKVISRPDRSAPAGGIPTVHKTAQNKIIKQALNQSEGGKSSAGN</sequence>
<reference key="1">
    <citation type="journal article" date="2002" name="Nucleic Acids Res.">
        <title>Genome sequence of Oceanobacillus iheyensis isolated from the Iheya Ridge and its unexpected adaptive capabilities to extreme environments.</title>
        <authorList>
            <person name="Takami H."/>
            <person name="Takaki Y."/>
            <person name="Uchiyama I."/>
        </authorList>
    </citation>
    <scope>NUCLEOTIDE SEQUENCE [LARGE SCALE GENOMIC DNA]</scope>
    <source>
        <strain>DSM 14371 / CIP 107618 / JCM 11309 / KCTC 3954 / HTE831</strain>
    </source>
</reference>
<evidence type="ECO:0000255" key="1">
    <source>
        <dbReference type="HAMAP-Rule" id="MF_01169"/>
    </source>
</evidence>
<feature type="chain" id="PRO_0000162175" description="2-oxoglutarate dehydrogenase E1 component">
    <location>
        <begin position="1"/>
        <end position="953"/>
    </location>
</feature>
<dbReference type="EC" id="1.2.4.2" evidence="1"/>
<dbReference type="EMBL" id="BA000028">
    <property type="protein sequence ID" value="BAC13045.1"/>
    <property type="molecule type" value="Genomic_DNA"/>
</dbReference>
<dbReference type="RefSeq" id="WP_011065490.1">
    <property type="nucleotide sequence ID" value="NC_004193.1"/>
</dbReference>
<dbReference type="SMR" id="Q8CUL8"/>
<dbReference type="STRING" id="221109.gene:10733328"/>
<dbReference type="KEGG" id="oih:OB1089"/>
<dbReference type="eggNOG" id="COG0567">
    <property type="taxonomic scope" value="Bacteria"/>
</dbReference>
<dbReference type="HOGENOM" id="CLU_004709_1_0_9"/>
<dbReference type="OrthoDB" id="9759785at2"/>
<dbReference type="PhylomeDB" id="Q8CUL8"/>
<dbReference type="Proteomes" id="UP000000822">
    <property type="component" value="Chromosome"/>
</dbReference>
<dbReference type="GO" id="GO:0005829">
    <property type="term" value="C:cytosol"/>
    <property type="evidence" value="ECO:0007669"/>
    <property type="project" value="TreeGrafter"/>
</dbReference>
<dbReference type="GO" id="GO:0045252">
    <property type="term" value="C:oxoglutarate dehydrogenase complex"/>
    <property type="evidence" value="ECO:0007669"/>
    <property type="project" value="TreeGrafter"/>
</dbReference>
<dbReference type="GO" id="GO:0004591">
    <property type="term" value="F:oxoglutarate dehydrogenase (succinyl-transferring) activity"/>
    <property type="evidence" value="ECO:0007669"/>
    <property type="project" value="UniProtKB-UniRule"/>
</dbReference>
<dbReference type="GO" id="GO:0030976">
    <property type="term" value="F:thiamine pyrophosphate binding"/>
    <property type="evidence" value="ECO:0007669"/>
    <property type="project" value="UniProtKB-UniRule"/>
</dbReference>
<dbReference type="GO" id="GO:0006096">
    <property type="term" value="P:glycolytic process"/>
    <property type="evidence" value="ECO:0007669"/>
    <property type="project" value="UniProtKB-UniRule"/>
</dbReference>
<dbReference type="GO" id="GO:0006099">
    <property type="term" value="P:tricarboxylic acid cycle"/>
    <property type="evidence" value="ECO:0007669"/>
    <property type="project" value="TreeGrafter"/>
</dbReference>
<dbReference type="CDD" id="cd02016">
    <property type="entry name" value="TPP_E1_OGDC_like"/>
    <property type="match status" value="1"/>
</dbReference>
<dbReference type="FunFam" id="3.40.50.970:FF:000036">
    <property type="entry name" value="2-oxoglutarate dehydrogenase E1 component"/>
    <property type="match status" value="1"/>
</dbReference>
<dbReference type="Gene3D" id="3.40.50.12470">
    <property type="match status" value="1"/>
</dbReference>
<dbReference type="Gene3D" id="3.40.50.970">
    <property type="match status" value="1"/>
</dbReference>
<dbReference type="Gene3D" id="3.40.50.11610">
    <property type="entry name" value="Multifunctional 2-oxoglutarate metabolism enzyme, C-terminal domain"/>
    <property type="match status" value="1"/>
</dbReference>
<dbReference type="Gene3D" id="1.10.287.1150">
    <property type="entry name" value="TPP helical domain"/>
    <property type="match status" value="1"/>
</dbReference>
<dbReference type="HAMAP" id="MF_01169">
    <property type="entry name" value="SucA_OdhA"/>
    <property type="match status" value="1"/>
</dbReference>
<dbReference type="InterPro" id="IPR011603">
    <property type="entry name" value="2oxoglutarate_DH_E1"/>
</dbReference>
<dbReference type="InterPro" id="IPR023784">
    <property type="entry name" value="2oxoglutarate_DH_E1_bac"/>
</dbReference>
<dbReference type="InterPro" id="IPR001017">
    <property type="entry name" value="DH_E1"/>
</dbReference>
<dbReference type="InterPro" id="IPR042179">
    <property type="entry name" value="KGD_C_sf"/>
</dbReference>
<dbReference type="InterPro" id="IPR031717">
    <property type="entry name" value="ODO-1/KGD_C"/>
</dbReference>
<dbReference type="InterPro" id="IPR029061">
    <property type="entry name" value="THDP-binding"/>
</dbReference>
<dbReference type="InterPro" id="IPR005475">
    <property type="entry name" value="Transketolase-like_Pyr-bd"/>
</dbReference>
<dbReference type="NCBIfam" id="TIGR00239">
    <property type="entry name" value="2oxo_dh_E1"/>
    <property type="match status" value="1"/>
</dbReference>
<dbReference type="NCBIfam" id="NF006914">
    <property type="entry name" value="PRK09404.1"/>
    <property type="match status" value="1"/>
</dbReference>
<dbReference type="NCBIfam" id="NF008907">
    <property type="entry name" value="PRK12270.1"/>
    <property type="match status" value="1"/>
</dbReference>
<dbReference type="PANTHER" id="PTHR23152:SF4">
    <property type="entry name" value="2-OXOADIPATE DEHYDROGENASE COMPLEX COMPONENT E1"/>
    <property type="match status" value="1"/>
</dbReference>
<dbReference type="PANTHER" id="PTHR23152">
    <property type="entry name" value="2-OXOGLUTARATE DEHYDROGENASE"/>
    <property type="match status" value="1"/>
</dbReference>
<dbReference type="Pfam" id="PF00676">
    <property type="entry name" value="E1_dh"/>
    <property type="match status" value="1"/>
</dbReference>
<dbReference type="Pfam" id="PF16870">
    <property type="entry name" value="OxoGdeHyase_C"/>
    <property type="match status" value="1"/>
</dbReference>
<dbReference type="Pfam" id="PF02779">
    <property type="entry name" value="Transket_pyr"/>
    <property type="match status" value="1"/>
</dbReference>
<dbReference type="PIRSF" id="PIRSF000157">
    <property type="entry name" value="Oxoglu_dh_E1"/>
    <property type="match status" value="1"/>
</dbReference>
<dbReference type="SMART" id="SM00861">
    <property type="entry name" value="Transket_pyr"/>
    <property type="match status" value="1"/>
</dbReference>
<dbReference type="SUPFAM" id="SSF52518">
    <property type="entry name" value="Thiamin diphosphate-binding fold (THDP-binding)"/>
    <property type="match status" value="2"/>
</dbReference>
<gene>
    <name evidence="1" type="primary">odhA</name>
    <name type="ordered locus">OB1089</name>
</gene>
<keyword id="KW-0324">Glycolysis</keyword>
<keyword id="KW-0560">Oxidoreductase</keyword>
<keyword id="KW-1185">Reference proteome</keyword>
<keyword id="KW-0786">Thiamine pyrophosphate</keyword>
<organism>
    <name type="scientific">Oceanobacillus iheyensis (strain DSM 14371 / CIP 107618 / JCM 11309 / KCTC 3954 / HTE831)</name>
    <dbReference type="NCBI Taxonomy" id="221109"/>
    <lineage>
        <taxon>Bacteria</taxon>
        <taxon>Bacillati</taxon>
        <taxon>Bacillota</taxon>
        <taxon>Bacilli</taxon>
        <taxon>Bacillales</taxon>
        <taxon>Bacillaceae</taxon>
        <taxon>Oceanobacillus</taxon>
    </lineage>
</organism>